<evidence type="ECO:0000255" key="1">
    <source>
        <dbReference type="HAMAP-Rule" id="MF_00663"/>
    </source>
</evidence>
<comment type="function">
    <text evidence="1">Catalyzes the formation of phosphatidylethanolamine (PtdEtn) from phosphatidylserine (PtdSer).</text>
</comment>
<comment type="catalytic activity">
    <reaction evidence="1">
        <text>a 1,2-diacyl-sn-glycero-3-phospho-L-serine + H(+) = a 1,2-diacyl-sn-glycero-3-phosphoethanolamine + CO2</text>
        <dbReference type="Rhea" id="RHEA:20828"/>
        <dbReference type="ChEBI" id="CHEBI:15378"/>
        <dbReference type="ChEBI" id="CHEBI:16526"/>
        <dbReference type="ChEBI" id="CHEBI:57262"/>
        <dbReference type="ChEBI" id="CHEBI:64612"/>
        <dbReference type="EC" id="4.1.1.65"/>
    </reaction>
</comment>
<comment type="cofactor">
    <cofactor evidence="1">
        <name>pyruvate</name>
        <dbReference type="ChEBI" id="CHEBI:15361"/>
    </cofactor>
    <text evidence="1">Binds 1 pyruvoyl group covalently per subunit.</text>
</comment>
<comment type="pathway">
    <text evidence="1">Phospholipid metabolism; phosphatidylethanolamine biosynthesis; phosphatidylethanolamine from CDP-diacylglycerol: step 2/2.</text>
</comment>
<comment type="subunit">
    <text evidence="1">Heterodimer of a large membrane-associated beta subunit and a small pyruvoyl-containing alpha subunit.</text>
</comment>
<comment type="subcellular location">
    <subcellularLocation>
        <location evidence="1">Cell membrane</location>
        <topology evidence="1">Peripheral membrane protein</topology>
    </subcellularLocation>
</comment>
<comment type="PTM">
    <text evidence="1">Is synthesized initially as an inactive proenzyme. Formation of the active enzyme involves a self-maturation process in which the active site pyruvoyl group is generated from an internal serine residue via an autocatalytic post-translational modification. Two non-identical subunits are generated from the proenzyme in this reaction, and the pyruvate is formed at the N-terminus of the alpha chain, which is derived from the carboxyl end of the proenzyme. The autoendoproteolytic cleavage occurs by a canonical serine protease mechanism, in which the side chain hydroxyl group of the serine supplies its oxygen atom to form the C-terminus of the beta chain, while the remainder of the serine residue undergoes an oxidative deamination to produce ammonia and the pyruvoyl prosthetic group on the alpha chain. During this reaction, the Ser that is part of the protease active site of the proenzyme becomes the pyruvoyl prosthetic group, which constitutes an essential element of the active site of the mature decarboxylase.</text>
</comment>
<comment type="similarity">
    <text evidence="1">Belongs to the phosphatidylserine decarboxylase family. PSD-B subfamily. Prokaryotic type II sub-subfamily.</text>
</comment>
<organism>
    <name type="scientific">Clostridium botulinum (strain Alaska E43 / Type E3)</name>
    <dbReference type="NCBI Taxonomy" id="508767"/>
    <lineage>
        <taxon>Bacteria</taxon>
        <taxon>Bacillati</taxon>
        <taxon>Bacillota</taxon>
        <taxon>Clostridia</taxon>
        <taxon>Eubacteriales</taxon>
        <taxon>Clostridiaceae</taxon>
        <taxon>Clostridium</taxon>
    </lineage>
</organism>
<accession>B2UX63</accession>
<proteinExistence type="inferred from homology"/>
<name>PSD_CLOBA</name>
<feature type="chain" id="PRO_1000131432" description="Phosphatidylserine decarboxylase beta chain" evidence="1">
    <location>
        <begin position="1"/>
        <end position="255"/>
    </location>
</feature>
<feature type="chain" id="PRO_1000131433" description="Phosphatidylserine decarboxylase alpha chain" evidence="1">
    <location>
        <begin position="256"/>
        <end position="296"/>
    </location>
</feature>
<feature type="active site" description="Charge relay system; for autoendoproteolytic cleavage activity" evidence="1">
    <location>
        <position position="113"/>
    </location>
</feature>
<feature type="active site" description="Charge relay system; for autoendoproteolytic cleavage activity" evidence="1">
    <location>
        <position position="169"/>
    </location>
</feature>
<feature type="active site" description="Charge relay system; for autoendoproteolytic cleavage activity" evidence="1">
    <location>
        <position position="256"/>
    </location>
</feature>
<feature type="active site" description="Schiff-base intermediate with substrate; via pyruvic acid; for decarboxylase activity" evidence="1">
    <location>
        <position position="256"/>
    </location>
</feature>
<feature type="site" description="Cleavage (non-hydrolytic); by autocatalysis" evidence="1">
    <location>
        <begin position="255"/>
        <end position="256"/>
    </location>
</feature>
<feature type="modified residue" description="Pyruvic acid (Ser); by autocatalysis" evidence="1">
    <location>
        <position position="256"/>
    </location>
</feature>
<protein>
    <recommendedName>
        <fullName evidence="1">Phosphatidylserine decarboxylase proenzyme</fullName>
        <ecNumber evidence="1">4.1.1.65</ecNumber>
    </recommendedName>
    <component>
        <recommendedName>
            <fullName evidence="1">Phosphatidylserine decarboxylase alpha chain</fullName>
        </recommendedName>
    </component>
    <component>
        <recommendedName>
            <fullName evidence="1">Phosphatidylserine decarboxylase beta chain</fullName>
        </recommendedName>
    </component>
</protein>
<dbReference type="EC" id="4.1.1.65" evidence="1"/>
<dbReference type="EMBL" id="CP001078">
    <property type="protein sequence ID" value="ACD51152.1"/>
    <property type="molecule type" value="Genomic_DNA"/>
</dbReference>
<dbReference type="RefSeq" id="WP_012449572.1">
    <property type="nucleotide sequence ID" value="NC_010723.1"/>
</dbReference>
<dbReference type="SMR" id="B2UX63"/>
<dbReference type="KEGG" id="cbt:CLH_0032"/>
<dbReference type="HOGENOM" id="CLU_029061_2_2_9"/>
<dbReference type="UniPathway" id="UPA00558">
    <property type="reaction ID" value="UER00616"/>
</dbReference>
<dbReference type="GO" id="GO:0005886">
    <property type="term" value="C:plasma membrane"/>
    <property type="evidence" value="ECO:0007669"/>
    <property type="project" value="UniProtKB-SubCell"/>
</dbReference>
<dbReference type="GO" id="GO:0004609">
    <property type="term" value="F:phosphatidylserine decarboxylase activity"/>
    <property type="evidence" value="ECO:0007669"/>
    <property type="project" value="UniProtKB-UniRule"/>
</dbReference>
<dbReference type="GO" id="GO:0006646">
    <property type="term" value="P:phosphatidylethanolamine biosynthetic process"/>
    <property type="evidence" value="ECO:0007669"/>
    <property type="project" value="UniProtKB-UniRule"/>
</dbReference>
<dbReference type="HAMAP" id="MF_00663">
    <property type="entry name" value="PS_decarb_PSD_B_type2"/>
    <property type="match status" value="1"/>
</dbReference>
<dbReference type="InterPro" id="IPR003817">
    <property type="entry name" value="PS_Dcarbxylase"/>
</dbReference>
<dbReference type="InterPro" id="IPR033177">
    <property type="entry name" value="PSD-B"/>
</dbReference>
<dbReference type="InterPro" id="IPR033179">
    <property type="entry name" value="PSD_type2_pro"/>
</dbReference>
<dbReference type="NCBIfam" id="NF001941">
    <property type="entry name" value="PRK00723.1"/>
    <property type="match status" value="1"/>
</dbReference>
<dbReference type="NCBIfam" id="TIGR00163">
    <property type="entry name" value="PS_decarb"/>
    <property type="match status" value="1"/>
</dbReference>
<dbReference type="PANTHER" id="PTHR10067">
    <property type="entry name" value="PHOSPHATIDYLSERINE DECARBOXYLASE"/>
    <property type="match status" value="1"/>
</dbReference>
<dbReference type="PANTHER" id="PTHR10067:SF17">
    <property type="entry name" value="PHOSPHATIDYLSERINE DECARBOXYLASE PROENZYME 2"/>
    <property type="match status" value="1"/>
</dbReference>
<dbReference type="Pfam" id="PF02666">
    <property type="entry name" value="PS_Dcarbxylase"/>
    <property type="match status" value="1"/>
</dbReference>
<keyword id="KW-1003">Cell membrane</keyword>
<keyword id="KW-0210">Decarboxylase</keyword>
<keyword id="KW-0444">Lipid biosynthesis</keyword>
<keyword id="KW-0443">Lipid metabolism</keyword>
<keyword id="KW-0456">Lyase</keyword>
<keyword id="KW-0472">Membrane</keyword>
<keyword id="KW-0594">Phospholipid biosynthesis</keyword>
<keyword id="KW-1208">Phospholipid metabolism</keyword>
<keyword id="KW-0670">Pyruvate</keyword>
<keyword id="KW-0865">Zymogen</keyword>
<gene>
    <name evidence="1" type="primary">psd</name>
    <name type="ordered locus">CLH_0032</name>
</gene>
<sequence>MIKVYNRITKEYEEENVAGKKFIKWTYETPVGKSITELIAKRKIFSKFYGKFCDTKRSAKKIPDFVENFNIDMNIAEKNISDFNSFNDFFVRNLIPTSRPIDTNENILISPGDGRITVYDNIDLDNIVQIKGLTYSLRELIKNDQITENYKDGICIILRLCPTDYHRFHFVDSGIPCETHKIKGHYYSVNPIALNSIPKLFCENKREWNIFKSENFGDILTVEVGATCVGSIIQTYEPNKRVLKGAEKGYFKFGGSTTILFLEKDKVKIDNDILEQSKQGYECKVLFGETIGTKIL</sequence>
<reference key="1">
    <citation type="submission" date="2008-05" db="EMBL/GenBank/DDBJ databases">
        <title>Complete genome sequence of Clostridium botulinum E3 str. Alaska E43.</title>
        <authorList>
            <person name="Brinkac L.M."/>
            <person name="Brown J.L."/>
            <person name="Bruce D."/>
            <person name="Detter C."/>
            <person name="Munk C."/>
            <person name="Smith L.A."/>
            <person name="Smith T.J."/>
            <person name="Sutton G."/>
            <person name="Brettin T.S."/>
        </authorList>
    </citation>
    <scope>NUCLEOTIDE SEQUENCE [LARGE SCALE GENOMIC DNA]</scope>
    <source>
        <strain>Alaska E43 / Type E3</strain>
    </source>
</reference>